<feature type="chain" id="PRO_1000204943" description="Probable RNA 2'-phosphotransferase">
    <location>
        <begin position="1"/>
        <end position="184"/>
    </location>
</feature>
<organism>
    <name type="scientific">Escherichia coli (strain K12 / MC4100 / BW2952)</name>
    <dbReference type="NCBI Taxonomy" id="595496"/>
    <lineage>
        <taxon>Bacteria</taxon>
        <taxon>Pseudomonadati</taxon>
        <taxon>Pseudomonadota</taxon>
        <taxon>Gammaproteobacteria</taxon>
        <taxon>Enterobacterales</taxon>
        <taxon>Enterobacteriaceae</taxon>
        <taxon>Escherichia</taxon>
    </lineage>
</organism>
<accession>C4ZT19</accession>
<gene>
    <name evidence="1" type="primary">kptA</name>
    <name type="ordered locus">BWG_4029</name>
</gene>
<dbReference type="EC" id="2.7.1.-" evidence="1"/>
<dbReference type="EMBL" id="CP001396">
    <property type="protein sequence ID" value="ACR61779.1"/>
    <property type="molecule type" value="Genomic_DNA"/>
</dbReference>
<dbReference type="RefSeq" id="WP_001151858.1">
    <property type="nucleotide sequence ID" value="NC_012759.1"/>
</dbReference>
<dbReference type="SMR" id="C4ZT19"/>
<dbReference type="KEGG" id="ebw:BWG_4029"/>
<dbReference type="HOGENOM" id="CLU_052998_4_0_6"/>
<dbReference type="GO" id="GO:0003950">
    <property type="term" value="F:NAD+ poly-ADP-ribosyltransferase activity"/>
    <property type="evidence" value="ECO:0007669"/>
    <property type="project" value="InterPro"/>
</dbReference>
<dbReference type="GO" id="GO:0000215">
    <property type="term" value="F:tRNA 2'-phosphotransferase activity"/>
    <property type="evidence" value="ECO:0007669"/>
    <property type="project" value="TreeGrafter"/>
</dbReference>
<dbReference type="GO" id="GO:0006388">
    <property type="term" value="P:tRNA splicing, via endonucleolytic cleavage and ligation"/>
    <property type="evidence" value="ECO:0007669"/>
    <property type="project" value="UniProtKB-UniRule"/>
</dbReference>
<dbReference type="FunFam" id="1.10.10.970:FF:000001">
    <property type="entry name" value="RNA 2'-phosphotransferase"/>
    <property type="match status" value="1"/>
</dbReference>
<dbReference type="FunFam" id="3.20.170.30:FF:000001">
    <property type="entry name" value="RNA 2'-phosphotransferase"/>
    <property type="match status" value="1"/>
</dbReference>
<dbReference type="Gene3D" id="3.20.170.30">
    <property type="match status" value="1"/>
</dbReference>
<dbReference type="Gene3D" id="1.10.10.970">
    <property type="entry name" value="RNA 2'-phosphotransferase, Tpt1/KptA family, N-terminal domain"/>
    <property type="match status" value="1"/>
</dbReference>
<dbReference type="HAMAP" id="MF_00299">
    <property type="entry name" value="KptA"/>
    <property type="match status" value="1"/>
</dbReference>
<dbReference type="InterPro" id="IPR002745">
    <property type="entry name" value="Ptrans_KptA/Tpt1"/>
</dbReference>
<dbReference type="InterPro" id="IPR042081">
    <property type="entry name" value="RNA_2'-PTrans_C"/>
</dbReference>
<dbReference type="InterPro" id="IPR022928">
    <property type="entry name" value="RNA_2'-PTrans_KptA"/>
</dbReference>
<dbReference type="InterPro" id="IPR042080">
    <property type="entry name" value="RNA_2'-PTrans_N"/>
</dbReference>
<dbReference type="NCBIfam" id="NF002012">
    <property type="entry name" value="PRK00819.1-1"/>
    <property type="match status" value="1"/>
</dbReference>
<dbReference type="NCBIfam" id="NF002014">
    <property type="entry name" value="PRK00819.1-4"/>
    <property type="match status" value="1"/>
</dbReference>
<dbReference type="PANTHER" id="PTHR12684">
    <property type="entry name" value="PUTATIVE PHOSPHOTRANSFERASE"/>
    <property type="match status" value="1"/>
</dbReference>
<dbReference type="PANTHER" id="PTHR12684:SF2">
    <property type="entry name" value="TRNA 2'-PHOSPHOTRANSFERASE 1"/>
    <property type="match status" value="1"/>
</dbReference>
<dbReference type="Pfam" id="PF01885">
    <property type="entry name" value="PTS_2-RNA"/>
    <property type="match status" value="1"/>
</dbReference>
<dbReference type="SUPFAM" id="SSF56399">
    <property type="entry name" value="ADP-ribosylation"/>
    <property type="match status" value="1"/>
</dbReference>
<protein>
    <recommendedName>
        <fullName evidence="1">Probable RNA 2'-phosphotransferase</fullName>
        <ecNumber evidence="1">2.7.1.-</ecNumber>
    </recommendedName>
</protein>
<comment type="function">
    <text evidence="1">Removes the 2'-phosphate from RNA via an intermediate in which the phosphate is ADP-ribosylated by NAD followed by a presumed transesterification to release the RNA and generate ADP-ribose 1''-2''-cyclic phosphate (APPR&gt;P). May function as an ADP-ribosylase.</text>
</comment>
<comment type="similarity">
    <text evidence="1">Belongs to the KptA/TPT1 family.</text>
</comment>
<sequence>MAKYNEKELADTSKFLSFVLRHKPEAIGIVLDREGWADIDKLILCAQKAGKRLTRALLDTVVATSDKKRFSYSSDGRCIRAVQGHSTSQVAISFAEKTPPQFLYHGTASRFLDEIKKQGLIAGERHYVHLSADEATARKVGARHGSSVILTVKAQEMAKRGLPFWQAENGVWLTSTVAVEFLEW</sequence>
<name>KPTA_ECOBW</name>
<keyword id="KW-0520">NAD</keyword>
<keyword id="KW-0808">Transferase</keyword>
<reference key="1">
    <citation type="journal article" date="2009" name="J. Bacteriol.">
        <title>Genomic sequencing reveals regulatory mutations and recombinational events in the widely used MC4100 lineage of Escherichia coli K-12.</title>
        <authorList>
            <person name="Ferenci T."/>
            <person name="Zhou Z."/>
            <person name="Betteridge T."/>
            <person name="Ren Y."/>
            <person name="Liu Y."/>
            <person name="Feng L."/>
            <person name="Reeves P.R."/>
            <person name="Wang L."/>
        </authorList>
    </citation>
    <scope>NUCLEOTIDE SEQUENCE [LARGE SCALE GENOMIC DNA]</scope>
    <source>
        <strain>K12 / MC4100 / BW2952</strain>
    </source>
</reference>
<proteinExistence type="inferred from homology"/>
<evidence type="ECO:0000255" key="1">
    <source>
        <dbReference type="HAMAP-Rule" id="MF_00299"/>
    </source>
</evidence>